<protein>
    <recommendedName>
        <fullName evidence="3">4,4'-diapophytoene desaturase (4,4'-diapolycopene-forming)</fullName>
        <ecNumber evidence="4">1.3.8.2</ecNumber>
    </recommendedName>
    <alternativeName>
        <fullName evidence="2">4,4'-diapophytoene desaturase</fullName>
    </alternativeName>
    <alternativeName>
        <fullName evidence="3">Dehydrosqualene desaturase</fullName>
    </alternativeName>
</protein>
<keyword id="KW-0125">Carotenoid biosynthesis</keyword>
<keyword id="KW-0274">FAD</keyword>
<keyword id="KW-0285">Flavoprotein</keyword>
<keyword id="KW-0560">Oxidoreductase</keyword>
<dbReference type="EC" id="1.3.8.2" evidence="4"/>
<dbReference type="EMBL" id="AY841893">
    <property type="protein sequence ID" value="AAX46183.1"/>
    <property type="molecule type" value="Genomic_DNA"/>
</dbReference>
<dbReference type="SMR" id="Q4VKV1"/>
<dbReference type="BioCyc" id="MetaCyc:MONOMER-16325"/>
<dbReference type="GO" id="GO:0102223">
    <property type="term" value="F:4,4'-diapophytoene desaturase (4,4'-diaponeurosporene-forming)"/>
    <property type="evidence" value="ECO:0007669"/>
    <property type="project" value="UniProtKB-EC"/>
</dbReference>
<dbReference type="GO" id="GO:0016117">
    <property type="term" value="P:carotenoid biosynthetic process"/>
    <property type="evidence" value="ECO:0007669"/>
    <property type="project" value="UniProtKB-KW"/>
</dbReference>
<dbReference type="Gene3D" id="3.50.50.60">
    <property type="entry name" value="FAD/NAD(P)-binding domain"/>
    <property type="match status" value="2"/>
</dbReference>
<dbReference type="InterPro" id="IPR002937">
    <property type="entry name" value="Amino_oxidase"/>
</dbReference>
<dbReference type="InterPro" id="IPR014105">
    <property type="entry name" value="Carotenoid/retinoid_OxRdtase"/>
</dbReference>
<dbReference type="InterPro" id="IPR036188">
    <property type="entry name" value="FAD/NAD-bd_sf"/>
</dbReference>
<dbReference type="InterPro" id="IPR008150">
    <property type="entry name" value="Phytoene_DH_bac_CS"/>
</dbReference>
<dbReference type="NCBIfam" id="TIGR02734">
    <property type="entry name" value="crtI_fam"/>
    <property type="match status" value="1"/>
</dbReference>
<dbReference type="PANTHER" id="PTHR43734">
    <property type="entry name" value="PHYTOENE DESATURASE"/>
    <property type="match status" value="1"/>
</dbReference>
<dbReference type="PANTHER" id="PTHR43734:SF1">
    <property type="entry name" value="PHYTOENE DESATURASE"/>
    <property type="match status" value="1"/>
</dbReference>
<dbReference type="Pfam" id="PF01593">
    <property type="entry name" value="Amino_oxidase"/>
    <property type="match status" value="1"/>
</dbReference>
<dbReference type="PRINTS" id="PR00419">
    <property type="entry name" value="ADXRDTASE"/>
</dbReference>
<dbReference type="SUPFAM" id="SSF51905">
    <property type="entry name" value="FAD/NAD(P)-binding domain"/>
    <property type="match status" value="1"/>
</dbReference>
<dbReference type="PROSITE" id="PS00982">
    <property type="entry name" value="PHYTOENE_DH"/>
    <property type="match status" value="1"/>
</dbReference>
<accession>Q4VKV1</accession>
<gene>
    <name evidence="5" type="primary">crtN</name>
</gene>
<sequence>MANTKHIIIVGAGPGGLCAGMLLSQRGFKVSIFDKHAEIGGRNRPINMNGFTFDTGPTFLLMKGVLDEMFELCERRSEDYLEFLPLSPMYRLLYDDRDIFVYSDRENMRAELQRVFDEGTDGYEQFMEQERKRFNALYPCITRDYSSLKSFLSLDLIKALPWLAFPKSVFNNLGQYFNQEKMRLAFCFQSKYLGMSPWECPALFTMLPYLEHEYGIYHVKGGLNRIAAAMAQVIAENGGEIHLNSEIESLIIENGAAKGVKLQHGAELRGDEVIINADFAHAMTHLVKPGVLKKYTPENLKQREYSCSTFMLYLGLDKIYDLPHHTIVFAKDYTTNIRNIFDNKTLTDDFSFYVQNASASDDSLAPAGKSALYVLVPMPNNDSGLDWQAHCQNVREQVLDTLGARLGLSDIRAHIECEKIITPQTWETDEHVYKGATFSLSHKFSQMLYWRPHNRFEELANCYLVGGGTHPGSGLPTIYESARISAKLISQKHRVRFKDIAHSAWLKKAKA</sequence>
<feature type="chain" id="PRO_0000443501" description="4,4'-diapophytoene desaturase (4,4'-diapolycopene-forming)">
    <location>
        <begin position="1"/>
        <end position="511"/>
    </location>
</feature>
<reference key="1">
    <citation type="journal article" date="2005" name="Appl. Environ. Microbiol.">
        <title>Novel carotenoid oxidase involved in biosynthesis of 4,4'-diapolycopene dialdehyde.</title>
        <authorList>
            <person name="Tao L."/>
            <person name="Schenzle A."/>
            <person name="Odom J.M."/>
            <person name="Cheng Q."/>
        </authorList>
    </citation>
    <scope>NUCLEOTIDE SEQUENCE [GENOMIC DNA]</scope>
    <scope>FUNCTION</scope>
    <scope>CATALYTIC ACTIVITY</scope>
    <scope>DISRUPTION PHENOTYPE</scope>
    <scope>PATHWAY</scope>
    <source>
        <strain evidence="5">16a</strain>
    </source>
</reference>
<organism>
    <name type="scientific">Methylomonas sp</name>
    <dbReference type="NCBI Taxonomy" id="418"/>
    <lineage>
        <taxon>Bacteria</taxon>
        <taxon>Pseudomonadati</taxon>
        <taxon>Pseudomonadota</taxon>
        <taxon>Gammaproteobacteria</taxon>
        <taxon>Methylococcales</taxon>
        <taxon>Methylococcaceae</taxon>
        <taxon>Methylomonas</taxon>
    </lineage>
</organism>
<name>CRTN_METSP</name>
<proteinExistence type="evidence at protein level"/>
<comment type="function">
    <text evidence="1">Involved in the biosynthesis of C30 carotenoids. Catalyzes four successive dehydrogenation reactions that lead to the introduction of four double bonds into 4,4'-diapophytoene (dehydrosqualene) to yield 4,4'-diapolycopene.</text>
</comment>
<comment type="catalytic activity">
    <reaction evidence="4">
        <text>15-cis-4,4'-diapophytoene + 4 FAD + 4 H(+) = all-trans-4,4'-diapolycopene + 4 FADH2</text>
        <dbReference type="Rhea" id="RHEA:31391"/>
        <dbReference type="ChEBI" id="CHEBI:15378"/>
        <dbReference type="ChEBI" id="CHEBI:57692"/>
        <dbReference type="ChEBI" id="CHEBI:58307"/>
        <dbReference type="ChEBI" id="CHEBI:62449"/>
        <dbReference type="ChEBI" id="CHEBI:62738"/>
        <dbReference type="EC" id="1.3.8.2"/>
    </reaction>
</comment>
<comment type="pathway">
    <text evidence="4">Carotenoid biosynthesis.</text>
</comment>
<comment type="disruption phenotype">
    <text evidence="1">Cells lacking this gene accumulate the colorless C30 carotenoid precursor 4,4'-diapophytoene.</text>
</comment>
<comment type="similarity">
    <text evidence="3">Belongs to the carotenoid/retinoid oxidoreductase family.</text>
</comment>
<evidence type="ECO:0000269" key="1">
    <source>
    </source>
</evidence>
<evidence type="ECO:0000303" key="2">
    <source>
    </source>
</evidence>
<evidence type="ECO:0000305" key="3"/>
<evidence type="ECO:0000305" key="4">
    <source>
    </source>
</evidence>
<evidence type="ECO:0000312" key="5">
    <source>
        <dbReference type="EMBL" id="AAX46183.1"/>
    </source>
</evidence>